<protein>
    <recommendedName>
        <fullName>T-cell leukemia translocation-altered gene protein homolog</fullName>
    </recommendedName>
</protein>
<proteinExistence type="inferred from homology"/>
<evidence type="ECO:0000250" key="1"/>
<evidence type="ECO:0000250" key="2">
    <source>
        <dbReference type="UniProtKB" id="P57738"/>
    </source>
</evidence>
<evidence type="ECO:0000255" key="3"/>
<evidence type="ECO:0000305" key="4"/>
<reference key="1">
    <citation type="journal article" date="2004" name="Genome Res.">
        <title>The status, quality, and expansion of the NIH full-length cDNA project: the Mammalian Gene Collection (MGC).</title>
        <authorList>
            <consortium name="The MGC Project Team"/>
        </authorList>
    </citation>
    <scope>NUCLEOTIDE SEQUENCE [LARGE SCALE MRNA]</scope>
    <source>
        <tissue>Heart</tissue>
    </source>
</reference>
<dbReference type="EMBL" id="BC083731">
    <property type="protein sequence ID" value="AAH83731.1"/>
    <property type="molecule type" value="mRNA"/>
</dbReference>
<dbReference type="RefSeq" id="NP_001014027.1">
    <property type="nucleotide sequence ID" value="NM_001014005.2"/>
</dbReference>
<dbReference type="FunCoup" id="Q5XIF1">
    <property type="interactions" value="346"/>
</dbReference>
<dbReference type="STRING" id="10116.ENSRNOP00000067537"/>
<dbReference type="GlyCosmos" id="Q5XIF1">
    <property type="glycosylation" value="1 site, No reported glycans"/>
</dbReference>
<dbReference type="GlyGen" id="Q5XIF1">
    <property type="glycosylation" value="1 site"/>
</dbReference>
<dbReference type="PhosphoSitePlus" id="Q5XIF1"/>
<dbReference type="PaxDb" id="10116-ENSRNOP00000067537"/>
<dbReference type="GeneID" id="306587"/>
<dbReference type="KEGG" id="rno:306587"/>
<dbReference type="AGR" id="RGD:1359333"/>
<dbReference type="CTD" id="6988"/>
<dbReference type="RGD" id="1359333">
    <property type="gene designation" value="Tcta"/>
</dbReference>
<dbReference type="eggNOG" id="ENOG502S6IC">
    <property type="taxonomic scope" value="Eukaryota"/>
</dbReference>
<dbReference type="HOGENOM" id="CLU_157357_0_0_1"/>
<dbReference type="InParanoid" id="Q5XIF1"/>
<dbReference type="OrthoDB" id="9529463at2759"/>
<dbReference type="PhylomeDB" id="Q5XIF1"/>
<dbReference type="ChiTaRS" id="Tcta">
    <property type="organism name" value="rat"/>
</dbReference>
<dbReference type="PRO" id="PR:Q5XIF1"/>
<dbReference type="Proteomes" id="UP000002494">
    <property type="component" value="Chromosome 8"/>
</dbReference>
<dbReference type="Bgee" id="ENSRNOG00000048237">
    <property type="expression patterns" value="Expressed in heart and 20 other cell types or tissues"/>
</dbReference>
<dbReference type="GO" id="GO:0016020">
    <property type="term" value="C:membrane"/>
    <property type="evidence" value="ECO:0007669"/>
    <property type="project" value="UniProtKB-SubCell"/>
</dbReference>
<dbReference type="GO" id="GO:0045671">
    <property type="term" value="P:negative regulation of osteoclast differentiation"/>
    <property type="evidence" value="ECO:0000266"/>
    <property type="project" value="RGD"/>
</dbReference>
<dbReference type="GO" id="GO:0072675">
    <property type="term" value="P:osteoclast fusion"/>
    <property type="evidence" value="ECO:0000266"/>
    <property type="project" value="RGD"/>
</dbReference>
<dbReference type="InterPro" id="IPR016560">
    <property type="entry name" value="TCTA"/>
</dbReference>
<dbReference type="PANTHER" id="PTHR32267">
    <property type="entry name" value="T-CELL LEUKEMIA TRANSLOCATION-ALTERED GENE PROTEIN"/>
    <property type="match status" value="1"/>
</dbReference>
<dbReference type="PANTHER" id="PTHR32267:SF2">
    <property type="entry name" value="T-CELL LEUKEMIA TRANSLOCATION-ALTERED GENE PROTEIN"/>
    <property type="match status" value="1"/>
</dbReference>
<dbReference type="Pfam" id="PF15128">
    <property type="entry name" value="T_cell_tran_alt"/>
    <property type="match status" value="1"/>
</dbReference>
<dbReference type="PIRSF" id="PIRSF009935">
    <property type="entry name" value="TCTA"/>
    <property type="match status" value="1"/>
</dbReference>
<name>TCTA_RAT</name>
<comment type="function">
    <text evidence="1">May be required for cellular fusion during osteoclastogenesis.</text>
</comment>
<comment type="subcellular location">
    <subcellularLocation>
        <location evidence="4">Membrane</location>
        <topology evidence="4">Multi-pass membrane protein</topology>
    </subcellularLocation>
</comment>
<comment type="similarity">
    <text evidence="4">Belongs to the TCTA family.</text>
</comment>
<keyword id="KW-0007">Acetylation</keyword>
<keyword id="KW-0325">Glycoprotein</keyword>
<keyword id="KW-0472">Membrane</keyword>
<keyword id="KW-1185">Reference proteome</keyword>
<keyword id="KW-0812">Transmembrane</keyword>
<keyword id="KW-1133">Transmembrane helix</keyword>
<gene>
    <name type="primary">Tcta</name>
</gene>
<organism>
    <name type="scientific">Rattus norvegicus</name>
    <name type="common">Rat</name>
    <dbReference type="NCBI Taxonomy" id="10116"/>
    <lineage>
        <taxon>Eukaryota</taxon>
        <taxon>Metazoa</taxon>
        <taxon>Chordata</taxon>
        <taxon>Craniata</taxon>
        <taxon>Vertebrata</taxon>
        <taxon>Euteleostomi</taxon>
        <taxon>Mammalia</taxon>
        <taxon>Eutheria</taxon>
        <taxon>Euarchontoglires</taxon>
        <taxon>Glires</taxon>
        <taxon>Rodentia</taxon>
        <taxon>Myomorpha</taxon>
        <taxon>Muroidea</taxon>
        <taxon>Muridae</taxon>
        <taxon>Murinae</taxon>
        <taxon>Rattus</taxon>
    </lineage>
</organism>
<sequence length="106" mass="11686">MAEPWAGQFLQALPATVLGALGTLGSEFLREWETQDMRVTLFKLLLLWLVLSLLGIQLAWGFYGNTVTGLYHRPGLGGQNGSTPDGSTHFPSWEMAANEALKTHRE</sequence>
<feature type="initiator methionine" description="Removed" evidence="2">
    <location>
        <position position="1"/>
    </location>
</feature>
<feature type="chain" id="PRO_0000301681" description="T-cell leukemia translocation-altered gene protein homolog">
    <location>
        <begin position="2"/>
        <end position="106"/>
    </location>
</feature>
<feature type="topological domain" description="Extracellular" evidence="3">
    <location>
        <begin position="2"/>
        <end position="8"/>
    </location>
</feature>
<feature type="transmembrane region" description="Helical" evidence="3">
    <location>
        <begin position="9"/>
        <end position="29"/>
    </location>
</feature>
<feature type="topological domain" description="Cytoplasmic" evidence="3">
    <location>
        <begin position="30"/>
        <end position="43"/>
    </location>
</feature>
<feature type="transmembrane region" description="Helical" evidence="3">
    <location>
        <begin position="44"/>
        <end position="64"/>
    </location>
</feature>
<feature type="topological domain" description="Extracellular" evidence="3">
    <location>
        <begin position="65"/>
        <end position="106"/>
    </location>
</feature>
<feature type="modified residue" description="N-acetylalanine" evidence="2">
    <location>
        <position position="2"/>
    </location>
</feature>
<feature type="glycosylation site" description="N-linked (GlcNAc...) asparagine" evidence="3">
    <location>
        <position position="80"/>
    </location>
</feature>
<accession>Q5XIF1</accession>